<accession>P43685</accession>
<accession>E2I6G2</accession>
<comment type="function">
    <text evidence="4">Has kallikrein-like activity, releases bradykinin from kininogen. Catalyzes the hydrolysis of various arginine ester substrates for trypsin and thrombin and degrades both angiotensin I and II by cleavage of the dipeptide Asp-Arg from the NH2-terminal end. Fibrinogen is also degraded but a fibrin clot is not produced. May have a potentiating effect on potent hemorrhagic toxins present in the venom.</text>
</comment>
<comment type="subcellular location">
    <subcellularLocation>
        <location>Secreted</location>
    </subcellularLocation>
</comment>
<comment type="tissue specificity">
    <text>Expressed by the mandibular venom gland.</text>
</comment>
<comment type="PTM">
    <text evidence="4">Extensively glycosylated, contains approximately 8 mol of monosaccharide per mol of toxin.</text>
</comment>
<comment type="toxic dose">
    <text evidence="4">LD(50) is 2.5 mg/kg of body weight by intravenous injection into mice.</text>
</comment>
<comment type="similarity">
    <text evidence="3">Belongs to the peptidase S1 family.</text>
</comment>
<comment type="caution">
    <text evidence="5">There is a significant difference between sequences of PubMed:20631207 and PubMed:8408054. The sequence of PubMed:8408054 may contain multiple errors since its last cysteine is absent from all other lizard toxin sequences and an insertion of 6 amino acids is present that is missing in other varanid lizard kallikrein toxins.</text>
</comment>
<feature type="chain" id="PRO_0000088723" description="Gilatoxin">
    <location>
        <begin position="1"/>
        <end position="230"/>
    </location>
</feature>
<feature type="domain" description="Peptidase S1" evidence="3">
    <location>
        <begin position="1"/>
        <end position="230"/>
    </location>
</feature>
<feature type="active site" description="Charge relay system" evidence="1">
    <location>
        <position position="41"/>
    </location>
</feature>
<feature type="active site" description="Charge relay system" evidence="1">
    <location>
        <position position="93"/>
    </location>
</feature>
<feature type="active site" description="Charge relay system" evidence="1">
    <location>
        <position position="187"/>
    </location>
</feature>
<feature type="glycosylation site" description="N-linked (GlcNAc...) asparagine" evidence="2">
    <location>
        <position position="84"/>
    </location>
</feature>
<feature type="disulfide bond" evidence="3">
    <location>
        <begin position="7"/>
        <end position="146"/>
    </location>
</feature>
<feature type="disulfide bond" evidence="3">
    <location>
        <begin position="26"/>
        <end position="42"/>
    </location>
</feature>
<feature type="disulfide bond" evidence="3">
    <location>
        <begin position="125"/>
        <end position="193"/>
    </location>
</feature>
<feature type="disulfide bond" evidence="3">
    <location>
        <begin position="157"/>
        <end position="172"/>
    </location>
</feature>
<feature type="disulfide bond" evidence="3">
    <location>
        <begin position="183"/>
        <end position="208"/>
    </location>
</feature>
<feature type="sequence conflict" description="In Ref. 2; AA sequence." evidence="5" ref="2">
    <original>C</original>
    <variation>W</variation>
    <location>
        <position position="26"/>
    </location>
</feature>
<feature type="sequence conflict" description="In Ref. 2; AA sequence." evidence="5" ref="2">
    <original>Q</original>
    <variation>R</variation>
    <location>
        <position position="33"/>
    </location>
</feature>
<feature type="sequence conflict" description="In Ref. 2; AA sequence." evidence="5" ref="2">
    <original>V</original>
    <variation>L</variation>
    <location>
        <position position="37"/>
    </location>
</feature>
<feature type="sequence conflict" description="In Ref. 2; AA sequence." evidence="5" ref="2">
    <original>FYLGELRIGLGVHNRR</original>
    <variation>EELGPMKICFGMKNRN</variation>
    <location>
        <begin position="43"/>
        <end position="58"/>
    </location>
</feature>
<feature type="sequence conflict" description="In Ref. 2; AA sequence." evidence="5" ref="2">
    <original>N</original>
    <variation>D</variation>
    <location>
        <position position="63"/>
    </location>
</feature>
<feature type="sequence conflict" description="In Ref. 2; AA sequence." evidence="5" ref="2">
    <original>RVSAR</original>
    <variation>KVAAV</variation>
    <location>
        <begin position="67"/>
        <end position="71"/>
    </location>
</feature>
<feature type="sequence conflict" description="In Ref. 2; AA sequence." evidence="5" ref="2">
    <original>SIITNSSCSEYTDDI</original>
    <variation>GTIYNCNYVNTVLMNNDLLKRELFP</variation>
    <location>
        <begin position="80"/>
        <end position="94"/>
    </location>
</feature>
<feature type="sequence conflict" description="In Ref. 2; AA sequence." evidence="5" ref="2">
    <original>EYT</original>
    <variation>DYN</variation>
    <location>
        <begin position="104"/>
        <end position="106"/>
    </location>
</feature>
<feature type="sequence conflict" description="In Ref. 2; AA sequence." evidence="5" ref="2">
    <original>R</original>
    <variation>A</variation>
    <location>
        <position position="110"/>
    </location>
</feature>
<feature type="sequence conflict" description="In Ref. 2; AA sequence." evidence="5" ref="2">
    <original>E</original>
    <variation>L</variation>
    <location>
        <position position="121"/>
    </location>
</feature>
<feature type="sequence conflict" description="In Ref. 2; AA sequence." evidence="5" ref="2">
    <original>TVM</original>
    <variation>SVL</variation>
    <location>
        <begin position="126"/>
        <end position="128"/>
    </location>
</feature>
<feature type="sequence conflict" description="In Ref. 2; AA sequence." evidence="5" ref="2">
    <original>P</original>
    <variation>D</variation>
    <location>
        <position position="136"/>
    </location>
</feature>
<feature type="sequence conflict" description="In Ref. 2; AA sequence." evidence="5" ref="2">
    <original>YPA</original>
    <variation>LPD</variation>
    <location>
        <begin position="140"/>
        <end position="142"/>
    </location>
</feature>
<feature type="sequence conflict" description="In Ref. 2; AA sequence." evidence="5" ref="2">
    <original>R</original>
    <variation>N</variation>
    <location>
        <position position="148"/>
    </location>
</feature>
<feature type="sequence conflict" description="In Ref. 2; AA sequence." evidence="5" ref="2">
    <original>ML</original>
    <variation>IF</variation>
    <location>
        <begin position="151"/>
        <end position="152"/>
    </location>
</feature>
<feature type="sequence conflict" description="In Ref. 2; AA sequence." evidence="5" ref="2">
    <original>EL</original>
    <variation>QV</variation>
    <location>
        <begin position="158"/>
        <end position="159"/>
    </location>
</feature>
<feature type="sequence conflict" description="In Ref. 2; AA sequence." evidence="5" ref="2">
    <original>NITDSV</original>
    <variation>KFTNK</variation>
    <location>
        <begin position="165"/>
        <end position="170"/>
    </location>
</feature>
<feature type="sequence conflict" description="In Ref. 2; AA sequence." evidence="5" ref="2">
    <original>TW</original>
    <variation>VD</variation>
    <location>
        <begin position="175"/>
        <end position="176"/>
    </location>
</feature>
<feature type="sequence conflict" description="In Ref. 2; AA sequence." evidence="5" ref="2">
    <original>ICRG</original>
    <variation>VCDN</variation>
    <location>
        <begin position="192"/>
        <end position="195"/>
    </location>
</feature>
<feature type="sequence conflict" description="In Ref. 2; AA sequence." evidence="5" ref="2">
    <original>I</original>
    <variation>N</variation>
    <location>
        <position position="200"/>
    </location>
</feature>
<feature type="sequence conflict" description="In Ref. 2; AA sequence." evidence="5" ref="2">
    <location>
        <position position="204"/>
    </location>
</feature>
<feature type="sequence conflict" description="In Ref. 2; AA sequence." evidence="5" ref="2">
    <original>P</original>
    <variation>N</variation>
    <location>
        <position position="207"/>
    </location>
</feature>
<feature type="sequence conflict" description="In Ref. 2; AA sequence." evidence="5" ref="2">
    <original>PLEYGVYTKVISFL</original>
    <variation>GEKYGYIKLIKFN</variation>
    <location>
        <begin position="211"/>
        <end position="224"/>
    </location>
</feature>
<feature type="sequence conflict" description="In Ref. 2; AA sequence." evidence="5" ref="2">
    <original>S</original>
    <variation>N</variation>
    <location>
        <position position="229"/>
    </location>
</feature>
<feature type="sequence conflict" description="In Ref. 2; AA sequence." evidence="5" ref="2">
    <original>I</original>
    <variation>IIQGGTTCP</variation>
    <location>
        <position position="230"/>
    </location>
</feature>
<protein>
    <recommendedName>
        <fullName>Gilatoxin</fullName>
        <shortName>GTX</shortName>
        <ecNumber>3.4.21.-</ecNumber>
    </recommendedName>
    <alternativeName>
        <fullName>Kallikrein-2</fullName>
    </alternativeName>
</protein>
<name>GILX_HELHO</name>
<proteinExistence type="evidence at protein level"/>
<sequence>IIGGQECDETGHPWLALLHRSEGSTCSGVLLNQDWIVTAAHCFYLGELRIGLGVHNRRVLRGNEQVRVSARKKCYPATASIITNSSCSEYTDDIMLIKLDSSVEYTERVRPLSLPTSPASEGAECTVMGWGTTTPPDVTYPAVPVCVRIEMLNNAVCELARDLWNITDSVLCAGTWFGGKDSCKGDSGGPLICRGQLTGIVSWGGFPCEQPLEYGVYTKVISFLFWIQSI</sequence>
<evidence type="ECO:0000250" key="1"/>
<evidence type="ECO:0000255" key="2"/>
<evidence type="ECO:0000255" key="3">
    <source>
        <dbReference type="PROSITE-ProRule" id="PRU00274"/>
    </source>
</evidence>
<evidence type="ECO:0000269" key="4">
    <source>
    </source>
</evidence>
<evidence type="ECO:0000305" key="5"/>
<organism>
    <name type="scientific">Heloderma horridum horridum</name>
    <name type="common">Mexican beaded lizard</name>
    <dbReference type="NCBI Taxonomy" id="8552"/>
    <lineage>
        <taxon>Eukaryota</taxon>
        <taxon>Metazoa</taxon>
        <taxon>Chordata</taxon>
        <taxon>Craniata</taxon>
        <taxon>Vertebrata</taxon>
        <taxon>Euteleostomi</taxon>
        <taxon>Lepidosauria</taxon>
        <taxon>Squamata</taxon>
        <taxon>Bifurcata</taxon>
        <taxon>Unidentata</taxon>
        <taxon>Episquamata</taxon>
        <taxon>Toxicofera</taxon>
        <taxon>Anguimorpha</taxon>
        <taxon>Neoanguimorpha</taxon>
        <taxon>Helodermatidae</taxon>
        <taxon>Heloderma</taxon>
    </lineage>
</organism>
<keyword id="KW-0903">Direct protein sequencing</keyword>
<keyword id="KW-1015">Disulfide bond</keyword>
<keyword id="KW-0325">Glycoprotein</keyword>
<keyword id="KW-0378">Hydrolase</keyword>
<keyword id="KW-0645">Protease</keyword>
<keyword id="KW-0964">Secreted</keyword>
<keyword id="KW-0720">Serine protease</keyword>
<keyword id="KW-0800">Toxin</keyword>
<dbReference type="EC" id="3.4.21.-"/>
<dbReference type="EMBL" id="HM437246">
    <property type="protein sequence ID" value="ADK55606.1"/>
    <property type="molecule type" value="mRNA"/>
</dbReference>
<dbReference type="PIR" id="A48598">
    <property type="entry name" value="A48598"/>
</dbReference>
<dbReference type="SMR" id="P43685"/>
<dbReference type="MEROPS" id="S01.435"/>
<dbReference type="GO" id="GO:0005615">
    <property type="term" value="C:extracellular space"/>
    <property type="evidence" value="ECO:0007669"/>
    <property type="project" value="TreeGrafter"/>
</dbReference>
<dbReference type="GO" id="GO:0004252">
    <property type="term" value="F:serine-type endopeptidase activity"/>
    <property type="evidence" value="ECO:0007669"/>
    <property type="project" value="InterPro"/>
</dbReference>
<dbReference type="GO" id="GO:0090729">
    <property type="term" value="F:toxin activity"/>
    <property type="evidence" value="ECO:0007669"/>
    <property type="project" value="UniProtKB-KW"/>
</dbReference>
<dbReference type="GO" id="GO:0006508">
    <property type="term" value="P:proteolysis"/>
    <property type="evidence" value="ECO:0007669"/>
    <property type="project" value="UniProtKB-KW"/>
</dbReference>
<dbReference type="CDD" id="cd00190">
    <property type="entry name" value="Tryp_SPc"/>
    <property type="match status" value="1"/>
</dbReference>
<dbReference type="FunFam" id="2.40.10.10:FF:000010">
    <property type="entry name" value="Kallikrein related peptidase 11"/>
    <property type="match status" value="1"/>
</dbReference>
<dbReference type="Gene3D" id="2.40.10.10">
    <property type="entry name" value="Trypsin-like serine proteases"/>
    <property type="match status" value="2"/>
</dbReference>
<dbReference type="InterPro" id="IPR009003">
    <property type="entry name" value="Peptidase_S1_PA"/>
</dbReference>
<dbReference type="InterPro" id="IPR043504">
    <property type="entry name" value="Peptidase_S1_PA_chymotrypsin"/>
</dbReference>
<dbReference type="InterPro" id="IPR001314">
    <property type="entry name" value="Peptidase_S1A"/>
</dbReference>
<dbReference type="InterPro" id="IPR050127">
    <property type="entry name" value="Serine_Proteases_S1"/>
</dbReference>
<dbReference type="InterPro" id="IPR001254">
    <property type="entry name" value="Trypsin_dom"/>
</dbReference>
<dbReference type="InterPro" id="IPR018114">
    <property type="entry name" value="TRYPSIN_HIS"/>
</dbReference>
<dbReference type="InterPro" id="IPR033116">
    <property type="entry name" value="TRYPSIN_SER"/>
</dbReference>
<dbReference type="PANTHER" id="PTHR24264:SF15">
    <property type="entry name" value="RIKEN CDNA 2210010C04 GENE"/>
    <property type="match status" value="1"/>
</dbReference>
<dbReference type="PANTHER" id="PTHR24264">
    <property type="entry name" value="TRYPSIN-RELATED"/>
    <property type="match status" value="1"/>
</dbReference>
<dbReference type="Pfam" id="PF00089">
    <property type="entry name" value="Trypsin"/>
    <property type="match status" value="1"/>
</dbReference>
<dbReference type="PRINTS" id="PR00722">
    <property type="entry name" value="CHYMOTRYPSIN"/>
</dbReference>
<dbReference type="SMART" id="SM00020">
    <property type="entry name" value="Tryp_SPc"/>
    <property type="match status" value="1"/>
</dbReference>
<dbReference type="SUPFAM" id="SSF50494">
    <property type="entry name" value="Trypsin-like serine proteases"/>
    <property type="match status" value="1"/>
</dbReference>
<dbReference type="PROSITE" id="PS50240">
    <property type="entry name" value="TRYPSIN_DOM"/>
    <property type="match status" value="1"/>
</dbReference>
<dbReference type="PROSITE" id="PS00134">
    <property type="entry name" value="TRYPSIN_HIS"/>
    <property type="match status" value="1"/>
</dbReference>
<dbReference type="PROSITE" id="PS00135">
    <property type="entry name" value="TRYPSIN_SER"/>
    <property type="match status" value="1"/>
</dbReference>
<reference key="1">
    <citation type="journal article" date="2010" name="Mol. Cell. Proteomics">
        <title>Functional and structural diversification of the Anguimorpha lizard venom system.</title>
        <authorList>
            <person name="Fry B.G."/>
            <person name="Winter K."/>
            <person name="Norman J.A."/>
            <person name="Roelants K."/>
            <person name="Nabuurs R.J."/>
            <person name="van Osch M.J."/>
            <person name="Teeuwisse W.M."/>
            <person name="van der Weerd L."/>
            <person name="McNaughtan J.E."/>
            <person name="Kwok H.F."/>
            <person name="Scheib H."/>
            <person name="Greisman L."/>
            <person name="Kochva E."/>
            <person name="Miller L.J."/>
            <person name="Gao F."/>
            <person name="Karas J."/>
            <person name="Scanlon D."/>
            <person name="Lin F."/>
            <person name="Kuruppu S."/>
            <person name="Shaw C."/>
            <person name="Wong L."/>
            <person name="Hodgson W.C."/>
        </authorList>
    </citation>
    <scope>NUCLEOTIDE SEQUENCE [MRNA]</scope>
    <source>
        <tissue>Venom gland</tissue>
    </source>
</reference>
<reference key="2">
    <citation type="journal article" date="1993" name="J. Biol. Chem.">
        <title>Complete primary structure and biochemical properties of gilatoxin, a serine protease with kallikrein-like and angiotensin-degrading activities.</title>
        <authorList>
            <person name="Utaisincharoen P."/>
            <person name="Mackessy S.P."/>
            <person name="Miller R.A."/>
            <person name="Tu A.T."/>
        </authorList>
    </citation>
    <scope>PROTEIN SEQUENCE</scope>
    <scope>FUNCTION</scope>
    <scope>GLYCOSYLATION</scope>
    <scope>TOXIC DOSE</scope>
    <source>
        <tissue>Venom</tissue>
    </source>
</reference>
<reference key="3">
    <citation type="journal article" date="1988" name="Arch. Biochem. Biophys.">
        <title>Isolation and characterization of horridum toxin with arginine ester hydrolase activity from Heloderma horridum (beaded lizard) venom.</title>
        <authorList>
            <person name="Nikai T."/>
            <person name="Imai K."/>
            <person name="Sugihara H."/>
            <person name="Tu A.T."/>
        </authorList>
    </citation>
    <scope>PRELIMINARY PROTEIN SEQUENCE OF 1-37</scope>
    <source>
        <tissue>Venom</tissue>
    </source>
</reference>